<dbReference type="EC" id="2.4.1.-"/>
<dbReference type="EMBL" id="AF417474">
    <property type="protein sequence ID" value="AAL50623.1"/>
    <property type="molecule type" value="mRNA"/>
</dbReference>
<dbReference type="EMBL" id="AC006920">
    <property type="protein sequence ID" value="AAD22285.1"/>
    <property type="molecule type" value="Genomic_DNA"/>
</dbReference>
<dbReference type="EMBL" id="CP002685">
    <property type="protein sequence ID" value="AEC06395.1"/>
    <property type="molecule type" value="Genomic_DNA"/>
</dbReference>
<dbReference type="EMBL" id="CP002685">
    <property type="protein sequence ID" value="AEC06396.1"/>
    <property type="molecule type" value="Genomic_DNA"/>
</dbReference>
<dbReference type="PIR" id="D84528">
    <property type="entry name" value="D84528"/>
</dbReference>
<dbReference type="RefSeq" id="NP_179141.1">
    <molecule id="Q9SJP2-2"/>
    <property type="nucleotide sequence ID" value="NM_127099.3"/>
</dbReference>
<dbReference type="RefSeq" id="NP_973468.2">
    <molecule id="Q9SJP2-1"/>
    <property type="nucleotide sequence ID" value="NM_201739.3"/>
</dbReference>
<dbReference type="SMR" id="Q9SJP2"/>
<dbReference type="FunCoup" id="Q9SJP2">
    <property type="interactions" value="6"/>
</dbReference>
<dbReference type="STRING" id="3702.Q9SJP2"/>
<dbReference type="CAZy" id="GT37">
    <property type="family name" value="Glycosyltransferase Family 37"/>
</dbReference>
<dbReference type="GlyCosmos" id="Q9SJP2">
    <property type="glycosylation" value="5 sites, No reported glycans"/>
</dbReference>
<dbReference type="GlyGen" id="Q9SJP2">
    <property type="glycosylation" value="5 sites"/>
</dbReference>
<dbReference type="PaxDb" id="3702-AT2G15390.2"/>
<dbReference type="ProteomicsDB" id="230048">
    <molecule id="Q9SJP2-1"/>
</dbReference>
<dbReference type="EnsemblPlants" id="AT2G15390.1">
    <molecule id="Q9SJP2-2"/>
    <property type="protein sequence ID" value="AT2G15390.1"/>
    <property type="gene ID" value="AT2G15390"/>
</dbReference>
<dbReference type="EnsemblPlants" id="AT2G15390.2">
    <molecule id="Q9SJP2-1"/>
    <property type="protein sequence ID" value="AT2G15390.2"/>
    <property type="gene ID" value="AT2G15390"/>
</dbReference>
<dbReference type="GeneID" id="816031"/>
<dbReference type="Gramene" id="AT2G15390.1">
    <molecule id="Q9SJP2-2"/>
    <property type="protein sequence ID" value="AT2G15390.1"/>
    <property type="gene ID" value="AT2G15390"/>
</dbReference>
<dbReference type="Gramene" id="AT2G15390.2">
    <molecule id="Q9SJP2-1"/>
    <property type="protein sequence ID" value="AT2G15390.2"/>
    <property type="gene ID" value="AT2G15390"/>
</dbReference>
<dbReference type="KEGG" id="ath:AT2G15390"/>
<dbReference type="Araport" id="AT2G15390"/>
<dbReference type="TAIR" id="AT2G15390">
    <property type="gene designation" value="FUT4"/>
</dbReference>
<dbReference type="eggNOG" id="ENOG502SC60">
    <property type="taxonomic scope" value="Eukaryota"/>
</dbReference>
<dbReference type="InParanoid" id="Q9SJP2"/>
<dbReference type="OMA" id="PFHGCEA"/>
<dbReference type="BioCyc" id="ARA:AT2G15390-MONOMER"/>
<dbReference type="UniPathway" id="UPA00378"/>
<dbReference type="PRO" id="PR:Q9SJP2"/>
<dbReference type="Proteomes" id="UP000006548">
    <property type="component" value="Chromosome 2"/>
</dbReference>
<dbReference type="ExpressionAtlas" id="Q9SJP2">
    <property type="expression patterns" value="baseline and differential"/>
</dbReference>
<dbReference type="GO" id="GO:0032580">
    <property type="term" value="C:Golgi cisterna membrane"/>
    <property type="evidence" value="ECO:0007669"/>
    <property type="project" value="UniProtKB-SubCell"/>
</dbReference>
<dbReference type="GO" id="GO:0031127">
    <property type="term" value="F:alpha-(1,2)-fucosyltransferase activity"/>
    <property type="evidence" value="ECO:0000316"/>
    <property type="project" value="TAIR"/>
</dbReference>
<dbReference type="GO" id="GO:0008417">
    <property type="term" value="F:fucosyltransferase activity"/>
    <property type="evidence" value="ECO:0000315"/>
    <property type="project" value="TAIR"/>
</dbReference>
<dbReference type="GO" id="GO:0008107">
    <property type="term" value="F:galactoside 2-alpha-L-fucosyltransferase activity"/>
    <property type="evidence" value="ECO:0007669"/>
    <property type="project" value="InterPro"/>
</dbReference>
<dbReference type="GO" id="GO:0042546">
    <property type="term" value="P:cell wall biogenesis"/>
    <property type="evidence" value="ECO:0007669"/>
    <property type="project" value="InterPro"/>
</dbReference>
<dbReference type="GO" id="GO:0071555">
    <property type="term" value="P:cell wall organization"/>
    <property type="evidence" value="ECO:0007669"/>
    <property type="project" value="UniProtKB-KW"/>
</dbReference>
<dbReference type="GO" id="GO:0006486">
    <property type="term" value="P:protein glycosylation"/>
    <property type="evidence" value="ECO:0007669"/>
    <property type="project" value="UniProtKB-UniPathway"/>
</dbReference>
<dbReference type="GO" id="GO:0009651">
    <property type="term" value="P:response to salt stress"/>
    <property type="evidence" value="ECO:0000315"/>
    <property type="project" value="TAIR"/>
</dbReference>
<dbReference type="FunFam" id="3.40.50.11340:FF:000005">
    <property type="entry name" value="Galactoside 2-alpha-L-fucosyltransferase"/>
    <property type="match status" value="1"/>
</dbReference>
<dbReference type="FunFam" id="3.40.50.11350:FF:000009">
    <property type="entry name" value="Galactoside 2-alpha-L-fucosyltransferase"/>
    <property type="match status" value="1"/>
</dbReference>
<dbReference type="Gene3D" id="3.40.50.11340">
    <property type="match status" value="1"/>
</dbReference>
<dbReference type="Gene3D" id="3.40.50.11350">
    <property type="match status" value="1"/>
</dbReference>
<dbReference type="InterPro" id="IPR004938">
    <property type="entry name" value="XG_FTase"/>
</dbReference>
<dbReference type="PANTHER" id="PTHR31889:SF45">
    <property type="entry name" value="FUCOSYLTRANSFERASE 10-RELATED"/>
    <property type="match status" value="1"/>
</dbReference>
<dbReference type="PANTHER" id="PTHR31889">
    <property type="entry name" value="FUCOSYLTRANSFERASE 2-RELATED"/>
    <property type="match status" value="1"/>
</dbReference>
<dbReference type="Pfam" id="PF03254">
    <property type="entry name" value="XG_FTase"/>
    <property type="match status" value="1"/>
</dbReference>
<evidence type="ECO:0000250" key="1"/>
<evidence type="ECO:0000255" key="2"/>
<evidence type="ECO:0000303" key="3">
    <source>
    </source>
</evidence>
<evidence type="ECO:0000305" key="4"/>
<feature type="chain" id="PRO_0000193913" description="Probable fucosyltransferase 4">
    <location>
        <begin position="1"/>
        <end position="535"/>
    </location>
</feature>
<feature type="topological domain" description="Cytoplasmic" evidence="2">
    <location>
        <begin position="1"/>
        <end position="20"/>
    </location>
</feature>
<feature type="transmembrane region" description="Helical; Signal-anchor for type II membrane protein" evidence="2">
    <location>
        <begin position="21"/>
        <end position="41"/>
    </location>
</feature>
<feature type="topological domain" description="Lumenal" evidence="2">
    <location>
        <begin position="42"/>
        <end position="535"/>
    </location>
</feature>
<feature type="glycosylation site" description="N-linked (GlcNAc...) asparagine" evidence="2">
    <location>
        <position position="136"/>
    </location>
</feature>
<feature type="glycosylation site" description="N-linked (GlcNAc...) asparagine" evidence="2">
    <location>
        <position position="226"/>
    </location>
</feature>
<feature type="glycosylation site" description="N-linked (GlcNAc...) asparagine" evidence="2">
    <location>
        <position position="230"/>
    </location>
</feature>
<feature type="glycosylation site" description="N-linked (GlcNAc...) asparagine" evidence="2">
    <location>
        <position position="377"/>
    </location>
</feature>
<feature type="glycosylation site" description="N-linked (GlcNAc...) asparagine" evidence="2">
    <location>
        <position position="409"/>
    </location>
</feature>
<feature type="splice variant" id="VSP_041309" description="In isoform 2." evidence="3">
    <location>
        <begin position="1"/>
        <end position="32"/>
    </location>
</feature>
<feature type="splice variant" id="VSP_041310" description="In isoform 2." evidence="3">
    <original>LSVMLLSFSNNFNNKLFAATIN</original>
    <variation>MFCHSLLAQRILLLTFFFVICS</variation>
    <location>
        <begin position="33"/>
        <end position="54"/>
    </location>
</feature>
<protein>
    <recommendedName>
        <fullName>Probable fucosyltransferase 4</fullName>
        <shortName>AtFUT4</shortName>
        <ecNumber>2.4.1.-</ecNumber>
    </recommendedName>
</protein>
<gene>
    <name type="primary">FUT4</name>
    <name type="ordered locus">At2g15390</name>
    <name type="ORF">F26H6.9</name>
</gene>
<accession>Q9SJP2</accession>
<comment type="function">
    <text>May be involved in cell wall biosynthesis. May act as a fucosyltransferase.</text>
</comment>
<comment type="pathway">
    <text>Protein modification; protein glycosylation.</text>
</comment>
<comment type="subcellular location">
    <subcellularLocation>
        <location evidence="1">Golgi apparatus</location>
        <location evidence="1">Golgi stack membrane</location>
        <topology evidence="1">Single-pass type II membrane protein</topology>
    </subcellularLocation>
    <text evidence="1">Membrane-bound form in trans cisternae of Golgi.</text>
</comment>
<comment type="alternative products">
    <event type="alternative splicing"/>
    <isoform>
        <id>Q9SJP2-1</id>
        <name>1</name>
        <sequence type="displayed"/>
    </isoform>
    <isoform>
        <id>Q9SJP2-2</id>
        <name>2</name>
        <sequence type="described" ref="VSP_041309 VSP_041310"/>
    </isoform>
</comment>
<comment type="tissue specificity">
    <text>Expressed in roots, stems, leaves, flowers, siliques and seedlings.</text>
</comment>
<comment type="miscellaneous">
    <molecule>Isoform 2</molecule>
    <text evidence="4">May be due to an intron retention.</text>
</comment>
<comment type="similarity">
    <text evidence="4">Belongs to the glycosyltransferase 37 family.</text>
</comment>
<name>FUT4_ARATH</name>
<organism>
    <name type="scientific">Arabidopsis thaliana</name>
    <name type="common">Mouse-ear cress</name>
    <dbReference type="NCBI Taxonomy" id="3702"/>
    <lineage>
        <taxon>Eukaryota</taxon>
        <taxon>Viridiplantae</taxon>
        <taxon>Streptophyta</taxon>
        <taxon>Embryophyta</taxon>
        <taxon>Tracheophyta</taxon>
        <taxon>Spermatophyta</taxon>
        <taxon>Magnoliopsida</taxon>
        <taxon>eudicotyledons</taxon>
        <taxon>Gunneridae</taxon>
        <taxon>Pentapetalae</taxon>
        <taxon>rosids</taxon>
        <taxon>malvids</taxon>
        <taxon>Brassicales</taxon>
        <taxon>Brassicaceae</taxon>
        <taxon>Camelineae</taxon>
        <taxon>Arabidopsis</taxon>
    </lineage>
</organism>
<keyword id="KW-0025">Alternative splicing</keyword>
<keyword id="KW-0961">Cell wall biogenesis/degradation</keyword>
<keyword id="KW-0325">Glycoprotein</keyword>
<keyword id="KW-0328">Glycosyltransferase</keyword>
<keyword id="KW-0333">Golgi apparatus</keyword>
<keyword id="KW-0472">Membrane</keyword>
<keyword id="KW-1185">Reference proteome</keyword>
<keyword id="KW-0735">Signal-anchor</keyword>
<keyword id="KW-0808">Transferase</keyword>
<keyword id="KW-0812">Transmembrane</keyword>
<keyword id="KW-1133">Transmembrane helix</keyword>
<sequence length="535" mass="61484">MYHIFQISGEVIKGLGLKTKILITIVFSTLLILSVMLLSFSNNFNNKLFAATINDESETPGRDRLIGGLLTADFDEGSCLSRYHKTFLYRKPSPYKPSEYLVSKLRSYEMLHKRCGPGTKAYKEATKHLSHDENYNASKSDGECRYVVWLADYGLGNRLLTLASVFLYALLTDRIILVDNRKDIGDLLCEPFPGTSWLLPLDFPLMKYADGYHKGYSRCYGTMLENHSINSTSFPPHLYMHNLHDSRDSDKMFFCQKDQSLIDKVPWLIFRANVYFVPSLWFNPTFQTELTKLFPQKETVFHHLGRYLFHPKNQVWDIVTKYYHDHLSKADERLGIQIRVFRDQGGYYQHVMDQVISCTQREKLLPELATQEESKVNISNIPKSKAVLVTSLSPEYSKKLENMFSERANMTGEIIKVYQPSGERYQQTDKKVHDQKALAEMYLLSLTDNIVASSRSTFGYVAYSLGGLKPWLLYLPNDNKAPDPPCVRSTSMEPCFLTPPTHGCEPDAWGTESGKVVPFVRYCEDIWGLKLFDEL</sequence>
<reference key="1">
    <citation type="journal article" date="2001" name="Plant Physiol.">
        <title>Characterization of a family of Arabidopsis genes related to xyloglucan fucosyltransferase1.</title>
        <authorList>
            <person name="Sarria R."/>
            <person name="Wagner T.A."/>
            <person name="O'Neill M.A."/>
            <person name="Faik A."/>
            <person name="Wilkerson C.G."/>
            <person name="Keegstra K."/>
            <person name="Raikhel N.V."/>
        </authorList>
    </citation>
    <scope>NUCLEOTIDE SEQUENCE [MRNA] (ISOFORM 2)</scope>
</reference>
<reference key="2">
    <citation type="journal article" date="1999" name="Nature">
        <title>Sequence and analysis of chromosome 2 of the plant Arabidopsis thaliana.</title>
        <authorList>
            <person name="Lin X."/>
            <person name="Kaul S."/>
            <person name="Rounsley S.D."/>
            <person name="Shea T.P."/>
            <person name="Benito M.-I."/>
            <person name="Town C.D."/>
            <person name="Fujii C.Y."/>
            <person name="Mason T.M."/>
            <person name="Bowman C.L."/>
            <person name="Barnstead M.E."/>
            <person name="Feldblyum T.V."/>
            <person name="Buell C.R."/>
            <person name="Ketchum K.A."/>
            <person name="Lee J.J."/>
            <person name="Ronning C.M."/>
            <person name="Koo H.L."/>
            <person name="Moffat K.S."/>
            <person name="Cronin L.A."/>
            <person name="Shen M."/>
            <person name="Pai G."/>
            <person name="Van Aken S."/>
            <person name="Umayam L."/>
            <person name="Tallon L.J."/>
            <person name="Gill J.E."/>
            <person name="Adams M.D."/>
            <person name="Carrera A.J."/>
            <person name="Creasy T.H."/>
            <person name="Goodman H.M."/>
            <person name="Somerville C.R."/>
            <person name="Copenhaver G.P."/>
            <person name="Preuss D."/>
            <person name="Nierman W.C."/>
            <person name="White O."/>
            <person name="Eisen J.A."/>
            <person name="Salzberg S.L."/>
            <person name="Fraser C.M."/>
            <person name="Venter J.C."/>
        </authorList>
    </citation>
    <scope>NUCLEOTIDE SEQUENCE [LARGE SCALE GENOMIC DNA]</scope>
    <source>
        <strain>cv. Columbia</strain>
    </source>
</reference>
<reference key="3">
    <citation type="journal article" date="2017" name="Plant J.">
        <title>Araport11: a complete reannotation of the Arabidopsis thaliana reference genome.</title>
        <authorList>
            <person name="Cheng C.Y."/>
            <person name="Krishnakumar V."/>
            <person name="Chan A.P."/>
            <person name="Thibaud-Nissen F."/>
            <person name="Schobel S."/>
            <person name="Town C.D."/>
        </authorList>
    </citation>
    <scope>GENOME REANNOTATION</scope>
    <source>
        <strain>cv. Columbia</strain>
    </source>
</reference>
<proteinExistence type="evidence at transcript level"/>